<keyword id="KW-0997">Cell inner membrane</keyword>
<keyword id="KW-1003">Cell membrane</keyword>
<keyword id="KW-0460">Magnesium</keyword>
<keyword id="KW-0472">Membrane</keyword>
<keyword id="KW-1185">Reference proteome</keyword>
<keyword id="KW-0808">Transferase</keyword>
<keyword id="KW-0812">Transmembrane</keyword>
<keyword id="KW-1133">Transmembrane helix</keyword>
<keyword id="KW-0831">Ubiquinone biosynthesis</keyword>
<gene>
    <name evidence="1" type="primary">ubiA</name>
    <name type="ordered locus">CKO_03875</name>
</gene>
<evidence type="ECO:0000255" key="1">
    <source>
        <dbReference type="HAMAP-Rule" id="MF_01635"/>
    </source>
</evidence>
<comment type="function">
    <text evidence="1">Catalyzes the prenylation of para-hydroxybenzoate (PHB) with an all-trans polyprenyl group. Mediates the second step in the final reaction sequence of ubiquinone-8 (UQ-8) biosynthesis, which is the condensation of the polyisoprenoid side chain with PHB, generating the first membrane-bound Q intermediate 3-octaprenyl-4-hydroxybenzoate.</text>
</comment>
<comment type="catalytic activity">
    <reaction evidence="1">
        <text>all-trans-octaprenyl diphosphate + 4-hydroxybenzoate = 4-hydroxy-3-(all-trans-octaprenyl)benzoate + diphosphate</text>
        <dbReference type="Rhea" id="RHEA:27782"/>
        <dbReference type="ChEBI" id="CHEBI:1617"/>
        <dbReference type="ChEBI" id="CHEBI:17879"/>
        <dbReference type="ChEBI" id="CHEBI:33019"/>
        <dbReference type="ChEBI" id="CHEBI:57711"/>
        <dbReference type="EC" id="2.5.1.39"/>
    </reaction>
</comment>
<comment type="cofactor">
    <cofactor evidence="1">
        <name>Mg(2+)</name>
        <dbReference type="ChEBI" id="CHEBI:18420"/>
    </cofactor>
</comment>
<comment type="pathway">
    <text evidence="1">Cofactor biosynthesis; ubiquinone biosynthesis.</text>
</comment>
<comment type="subcellular location">
    <subcellularLocation>
        <location evidence="1">Cell inner membrane</location>
        <topology evidence="1">Multi-pass membrane protein</topology>
    </subcellularLocation>
</comment>
<comment type="similarity">
    <text evidence="1">Belongs to the UbiA prenyltransferase family.</text>
</comment>
<sequence length="289" mass="32229">MEWSLTQNKLLAFHRLMRTDKPIGALLLLWPTLWALWVATPGVPQLWILAVFVAGVWLMRAAGCVVNDYADRKFDGHVKRTANRPLPSGAVTEKEARTLFVVLVALSFLLVLTLNTMTILLSIAALALAWVYPFMKRYTHLPQVVLGAAFGWSIPMAFAAVSESVPLSCWLMFLANILWAVAYDTQYAMVDRDDDLKIGIKSTAILFGRHDKLIIGILQIAVLALMALIGWLNGLGWGYYWSVLVAGALFVYQQKLIVGREREACFKAFMNNNYVGLVLFLGLAMSYVG</sequence>
<reference key="1">
    <citation type="submission" date="2007-08" db="EMBL/GenBank/DDBJ databases">
        <authorList>
            <consortium name="The Citrobacter koseri Genome Sequencing Project"/>
            <person name="McClelland M."/>
            <person name="Sanderson E.K."/>
            <person name="Porwollik S."/>
            <person name="Spieth J."/>
            <person name="Clifton W.S."/>
            <person name="Latreille P."/>
            <person name="Courtney L."/>
            <person name="Wang C."/>
            <person name="Pepin K."/>
            <person name="Bhonagiri V."/>
            <person name="Nash W."/>
            <person name="Johnson M."/>
            <person name="Thiruvilangam P."/>
            <person name="Wilson R."/>
        </authorList>
    </citation>
    <scope>NUCLEOTIDE SEQUENCE [LARGE SCALE GENOMIC DNA]</scope>
    <source>
        <strain>ATCC BAA-895 / CDC 4225-83 / SGSC4696</strain>
    </source>
</reference>
<feature type="chain" id="PRO_1000069814" description="4-hydroxybenzoate octaprenyltransferase">
    <location>
        <begin position="1"/>
        <end position="289"/>
    </location>
</feature>
<feature type="transmembrane region" description="Helical" evidence="1">
    <location>
        <begin position="23"/>
        <end position="43"/>
    </location>
</feature>
<feature type="transmembrane region" description="Helical" evidence="1">
    <location>
        <begin position="46"/>
        <end position="66"/>
    </location>
</feature>
<feature type="transmembrane region" description="Helical" evidence="1">
    <location>
        <begin position="99"/>
        <end position="119"/>
    </location>
</feature>
<feature type="transmembrane region" description="Helical" evidence="1">
    <location>
        <begin position="141"/>
        <end position="161"/>
    </location>
</feature>
<feature type="transmembrane region" description="Helical" evidence="1">
    <location>
        <begin position="163"/>
        <end position="183"/>
    </location>
</feature>
<feature type="transmembrane region" description="Helical" evidence="1">
    <location>
        <begin position="213"/>
        <end position="233"/>
    </location>
</feature>
<feature type="transmembrane region" description="Helical" evidence="1">
    <location>
        <begin position="234"/>
        <end position="254"/>
    </location>
</feature>
<feature type="transmembrane region" description="Helical" evidence="1">
    <location>
        <begin position="268"/>
        <end position="288"/>
    </location>
</feature>
<organism>
    <name type="scientific">Citrobacter koseri (strain ATCC BAA-895 / CDC 4225-83 / SGSC4696)</name>
    <dbReference type="NCBI Taxonomy" id="290338"/>
    <lineage>
        <taxon>Bacteria</taxon>
        <taxon>Pseudomonadati</taxon>
        <taxon>Pseudomonadota</taxon>
        <taxon>Gammaproteobacteria</taxon>
        <taxon>Enterobacterales</taxon>
        <taxon>Enterobacteriaceae</taxon>
        <taxon>Citrobacter</taxon>
    </lineage>
</organism>
<accession>A8AN88</accession>
<proteinExistence type="inferred from homology"/>
<name>UBIA_CITK8</name>
<protein>
    <recommendedName>
        <fullName evidence="1">4-hydroxybenzoate octaprenyltransferase</fullName>
        <ecNumber evidence="1">2.5.1.39</ecNumber>
    </recommendedName>
    <alternativeName>
        <fullName evidence="1">4-HB polyprenyltransferase</fullName>
    </alternativeName>
</protein>
<dbReference type="EC" id="2.5.1.39" evidence="1"/>
<dbReference type="EMBL" id="CP000822">
    <property type="protein sequence ID" value="ABV14951.1"/>
    <property type="molecule type" value="Genomic_DNA"/>
</dbReference>
<dbReference type="RefSeq" id="WP_012134645.1">
    <property type="nucleotide sequence ID" value="NC_009792.1"/>
</dbReference>
<dbReference type="SMR" id="A8AN88"/>
<dbReference type="STRING" id="290338.CKO_03875"/>
<dbReference type="GeneID" id="45137545"/>
<dbReference type="KEGG" id="cko:CKO_03875"/>
<dbReference type="HOGENOM" id="CLU_034879_1_0_6"/>
<dbReference type="OrthoDB" id="9782418at2"/>
<dbReference type="UniPathway" id="UPA00232"/>
<dbReference type="Proteomes" id="UP000008148">
    <property type="component" value="Chromosome"/>
</dbReference>
<dbReference type="GO" id="GO:0005886">
    <property type="term" value="C:plasma membrane"/>
    <property type="evidence" value="ECO:0007669"/>
    <property type="project" value="UniProtKB-SubCell"/>
</dbReference>
<dbReference type="GO" id="GO:0008412">
    <property type="term" value="F:4-hydroxybenzoate polyprenyltransferase activity"/>
    <property type="evidence" value="ECO:0007669"/>
    <property type="project" value="UniProtKB-UniRule"/>
</dbReference>
<dbReference type="GO" id="GO:0006744">
    <property type="term" value="P:ubiquinone biosynthetic process"/>
    <property type="evidence" value="ECO:0007669"/>
    <property type="project" value="UniProtKB-UniRule"/>
</dbReference>
<dbReference type="CDD" id="cd13959">
    <property type="entry name" value="PT_UbiA_COQ2"/>
    <property type="match status" value="1"/>
</dbReference>
<dbReference type="FunFam" id="1.10.357.140:FF:000002">
    <property type="entry name" value="4-hydroxybenzoate octaprenyltransferase"/>
    <property type="match status" value="1"/>
</dbReference>
<dbReference type="FunFam" id="1.20.120.1780:FF:000001">
    <property type="entry name" value="4-hydroxybenzoate octaprenyltransferase"/>
    <property type="match status" value="1"/>
</dbReference>
<dbReference type="Gene3D" id="1.10.357.140">
    <property type="entry name" value="UbiA prenyltransferase"/>
    <property type="match status" value="1"/>
</dbReference>
<dbReference type="Gene3D" id="1.20.120.1780">
    <property type="entry name" value="UbiA prenyltransferase"/>
    <property type="match status" value="1"/>
</dbReference>
<dbReference type="HAMAP" id="MF_01635">
    <property type="entry name" value="UbiA"/>
    <property type="match status" value="1"/>
</dbReference>
<dbReference type="InterPro" id="IPR006370">
    <property type="entry name" value="HB_polyprenyltransferase-like"/>
</dbReference>
<dbReference type="InterPro" id="IPR039653">
    <property type="entry name" value="Prenyltransferase"/>
</dbReference>
<dbReference type="InterPro" id="IPR000537">
    <property type="entry name" value="UbiA_prenyltransferase"/>
</dbReference>
<dbReference type="InterPro" id="IPR030470">
    <property type="entry name" value="UbiA_prenylTrfase_CS"/>
</dbReference>
<dbReference type="InterPro" id="IPR044878">
    <property type="entry name" value="UbiA_sf"/>
</dbReference>
<dbReference type="NCBIfam" id="TIGR01474">
    <property type="entry name" value="ubiA_proteo"/>
    <property type="match status" value="1"/>
</dbReference>
<dbReference type="PANTHER" id="PTHR11048:SF28">
    <property type="entry name" value="4-HYDROXYBENZOATE POLYPRENYLTRANSFERASE, MITOCHONDRIAL"/>
    <property type="match status" value="1"/>
</dbReference>
<dbReference type="PANTHER" id="PTHR11048">
    <property type="entry name" value="PRENYLTRANSFERASES"/>
    <property type="match status" value="1"/>
</dbReference>
<dbReference type="Pfam" id="PF01040">
    <property type="entry name" value="UbiA"/>
    <property type="match status" value="1"/>
</dbReference>
<dbReference type="PROSITE" id="PS00943">
    <property type="entry name" value="UBIA"/>
    <property type="match status" value="1"/>
</dbReference>